<reference key="1">
    <citation type="journal article" date="1990" name="Mol. Microbiol.">
        <title>Five genes at the 3' end of the Klebsiella pneumoniae pulC operon are required for pullulanase secretion.</title>
        <authorList>
            <person name="Pugsley A.P."/>
            <person name="Reyss I."/>
        </authorList>
    </citation>
    <scope>NUCLEOTIDE SEQUENCE [GENOMIC DNA]</scope>
    <source>
        <strain>UNF 5023</strain>
    </source>
</reference>
<accession>P15751</accession>
<keyword id="KW-0002">3D-structure</keyword>
<keyword id="KW-0997">Cell inner membrane</keyword>
<keyword id="KW-1003">Cell membrane</keyword>
<keyword id="KW-0472">Membrane</keyword>
<keyword id="KW-0653">Protein transport</keyword>
<keyword id="KW-0812">Transmembrane</keyword>
<keyword id="KW-1133">Transmembrane helix</keyword>
<keyword id="KW-0813">Transport</keyword>
<gene>
    <name type="primary">pulL</name>
</gene>
<organism>
    <name type="scientific">Klebsiella pneumoniae</name>
    <dbReference type="NCBI Taxonomy" id="573"/>
    <lineage>
        <taxon>Bacteria</taxon>
        <taxon>Pseudomonadati</taxon>
        <taxon>Pseudomonadota</taxon>
        <taxon>Gammaproteobacteria</taxon>
        <taxon>Enterobacterales</taxon>
        <taxon>Enterobacteriaceae</taxon>
        <taxon>Klebsiella/Raoultella group</taxon>
        <taxon>Klebsiella</taxon>
        <taxon>Klebsiella pneumoniae complex</taxon>
    </lineage>
</organism>
<dbReference type="EMBL" id="M32613">
    <property type="protein sequence ID" value="AAA25134.1"/>
    <property type="molecule type" value="Genomic_DNA"/>
</dbReference>
<dbReference type="EMBL" id="X52462">
    <property type="protein sequence ID" value="CAA36697.1"/>
    <property type="molecule type" value="Genomic_DNA"/>
</dbReference>
<dbReference type="PIR" id="S11800">
    <property type="entry name" value="S11800"/>
</dbReference>
<dbReference type="PDB" id="8A9W">
    <property type="method" value="X-ray"/>
    <property type="resolution" value="1.90 A"/>
    <property type="chains" value="A=317-395"/>
</dbReference>
<dbReference type="PDB" id="8AB1">
    <property type="method" value="X-ray"/>
    <property type="resolution" value="2.77 A"/>
    <property type="chains" value="E=317-396"/>
</dbReference>
<dbReference type="PDBsum" id="8A9W"/>
<dbReference type="PDBsum" id="8AB1"/>
<dbReference type="SMR" id="P15751"/>
<dbReference type="TCDB" id="3.A.15.1.1">
    <property type="family name" value="the outer membrane protein secreting main terminal branch (mtb) family"/>
</dbReference>
<dbReference type="GO" id="GO:0009276">
    <property type="term" value="C:Gram-negative-bacterium-type cell wall"/>
    <property type="evidence" value="ECO:0007669"/>
    <property type="project" value="InterPro"/>
</dbReference>
<dbReference type="GO" id="GO:0005886">
    <property type="term" value="C:plasma membrane"/>
    <property type="evidence" value="ECO:0007669"/>
    <property type="project" value="UniProtKB-SubCell"/>
</dbReference>
<dbReference type="GO" id="GO:0015627">
    <property type="term" value="C:type II protein secretion system complex"/>
    <property type="evidence" value="ECO:0007669"/>
    <property type="project" value="InterPro"/>
</dbReference>
<dbReference type="GO" id="GO:0015628">
    <property type="term" value="P:protein secretion by the type II secretion system"/>
    <property type="evidence" value="ECO:0007669"/>
    <property type="project" value="InterPro"/>
</dbReference>
<dbReference type="CDD" id="cd24017">
    <property type="entry name" value="ASKHA_T2SSL_N"/>
    <property type="match status" value="1"/>
</dbReference>
<dbReference type="Gene3D" id="3.30.420.370">
    <property type="match status" value="1"/>
</dbReference>
<dbReference type="Gene3D" id="3.30.420.380">
    <property type="match status" value="1"/>
</dbReference>
<dbReference type="Gene3D" id="3.30.1360.100">
    <property type="entry name" value="General secretion pathway protein M, EpsM"/>
    <property type="match status" value="1"/>
</dbReference>
<dbReference type="InterPro" id="IPR043129">
    <property type="entry name" value="ATPase_NBD"/>
</dbReference>
<dbReference type="InterPro" id="IPR024230">
    <property type="entry name" value="GspL_cyto_dom"/>
</dbReference>
<dbReference type="InterPro" id="IPR025691">
    <property type="entry name" value="GspL_pp_dom"/>
</dbReference>
<dbReference type="InterPro" id="IPR007812">
    <property type="entry name" value="T2SS_protein-GspL"/>
</dbReference>
<dbReference type="NCBIfam" id="TIGR01709">
    <property type="entry name" value="typeII_sec_gspL"/>
    <property type="match status" value="1"/>
</dbReference>
<dbReference type="Pfam" id="PF12693">
    <property type="entry name" value="GspL_C"/>
    <property type="match status" value="1"/>
</dbReference>
<dbReference type="Pfam" id="PF05134">
    <property type="entry name" value="T2SSL"/>
    <property type="match status" value="1"/>
</dbReference>
<dbReference type="PIRSF" id="PIRSF015761">
    <property type="entry name" value="Protein_L"/>
    <property type="match status" value="1"/>
</dbReference>
<dbReference type="SUPFAM" id="SSF53067">
    <property type="entry name" value="Actin-like ATPase domain"/>
    <property type="match status" value="2"/>
</dbReference>
<proteinExistence type="evidence at protein level"/>
<sequence length="398" mass="44199">MNNHHTSSAAVLIIRLNPDAATAIWRLAAPGDTAQTGEWHPDAGDPTLSLLAQRHPAWVLVPASDCAFHRVALPAGARRRPQQALAFLLEEQLATEVEESHFALLHQHKTDCAVAVVGRGKMRAWQAWCDSLGLSVLALTPDVLALPHSPTGWSAVRCGEQWLFRCDTWGGMAVETVWLDQLLTHWQDLAPIACYSPPPDIAAPWQPLPAQDLLQLAAANPDARRICLRQGDFAAKRRRQPTPRRWRPVIVAALALLLLWSSNCLHDHLMLGQQADAAVQASRDFYRQWFQTEKNVVNPRLQMQQHLRQMKNAGARPALISRLGALQQIIDDTPGIRLRTLSFDAARNALQLEISAVSSQALEQFSQRARARFRVQTGEMKPRADGIEGRLTLEGNDA</sequence>
<comment type="function">
    <text evidence="1">Inner membrane component of the type II secretion system required for the energy-dependent secretion of extracellular factors such as proteases and toxins from the periplasm. Plays a role in the complex assembly and recruits PulM resulting in a stable complex in the inner membrane. Provides thus a link between the energy-providing PulE protein in the cytoplasm and the rest of the T2SS machinery.</text>
</comment>
<comment type="subunit">
    <text evidence="1 2">Type II secretion system is composed of four main components: the outer membrane complex, the inner membrane complex, the cytoplasmic secretion ATPase and the periplasm-spanning pseudopilus (By similarity). Forms homodimers. Interacts with PulM/GspM. Interacts with PulE/GspE and PulF/GspF (By similarity).</text>
</comment>
<comment type="subcellular location">
    <subcellularLocation>
        <location evidence="1">Cell inner membrane</location>
        <topology evidence="1">Single-pass membrane protein</topology>
    </subcellularLocation>
</comment>
<comment type="similarity">
    <text evidence="3">Belongs to the GSP L family.</text>
</comment>
<feature type="chain" id="PRO_0000207317" description="Type II secretion system protein L">
    <location>
        <begin position="1"/>
        <end position="398"/>
    </location>
</feature>
<feature type="topological domain" description="Cytoplasmic" evidence="1">
    <location>
        <begin position="1"/>
        <end position="248"/>
    </location>
</feature>
<feature type="transmembrane region" description="Helical" evidence="1">
    <location>
        <begin position="249"/>
        <end position="265"/>
    </location>
</feature>
<feature type="topological domain" description="Periplasmic" evidence="1">
    <location>
        <begin position="266"/>
        <end position="398"/>
    </location>
</feature>
<feature type="helix" evidence="4">
    <location>
        <begin position="320"/>
        <end position="332"/>
    </location>
</feature>
<feature type="strand" evidence="4">
    <location>
        <begin position="336"/>
        <end position="344"/>
    </location>
</feature>
<feature type="turn" evidence="4">
    <location>
        <begin position="345"/>
        <end position="348"/>
    </location>
</feature>
<feature type="strand" evidence="4">
    <location>
        <begin position="349"/>
        <end position="358"/>
    </location>
</feature>
<feature type="helix" evidence="4">
    <location>
        <begin position="359"/>
        <end position="372"/>
    </location>
</feature>
<feature type="strand" evidence="4">
    <location>
        <begin position="373"/>
        <end position="375"/>
    </location>
</feature>
<feature type="strand" evidence="5">
    <location>
        <begin position="380"/>
        <end position="385"/>
    </location>
</feature>
<feature type="strand" evidence="4">
    <location>
        <begin position="387"/>
        <end position="394"/>
    </location>
</feature>
<evidence type="ECO:0000250" key="1">
    <source>
        <dbReference type="UniProtKB" id="P25060"/>
    </source>
</evidence>
<evidence type="ECO:0000250" key="2">
    <source>
        <dbReference type="UniProtKB" id="Q00514"/>
    </source>
</evidence>
<evidence type="ECO:0000305" key="3"/>
<evidence type="ECO:0007829" key="4">
    <source>
        <dbReference type="PDB" id="8A9W"/>
    </source>
</evidence>
<evidence type="ECO:0007829" key="5">
    <source>
        <dbReference type="PDB" id="8AB1"/>
    </source>
</evidence>
<protein>
    <recommendedName>
        <fullName>Type II secretion system protein L</fullName>
        <shortName>T2SS protein L</shortName>
    </recommendedName>
    <alternativeName>
        <fullName>General secretion pathway protein L</fullName>
    </alternativeName>
    <alternativeName>
        <fullName>Pullulanase secretion protein PulL</fullName>
    </alternativeName>
</protein>
<name>GSPL_KLEPN</name>